<accession>P0A7V6</accession>
<accession>P02352</accession>
<protein>
    <recommendedName>
        <fullName evidence="2">Small ribosomal subunit protein uS3</fullName>
    </recommendedName>
    <alternativeName>
        <fullName>30S ribosomal protein S3</fullName>
    </alternativeName>
</protein>
<comment type="function">
    <text evidence="1">Binds the lower part of the 30S subunit head. Binds mRNA in the 70S ribosome, positioning it for translation (By similarity).</text>
</comment>
<comment type="subunit">
    <text evidence="1">Part of the 30S ribosomal subunit. Forms a tight complex with proteins S10 and S14. Some nascent polypeptide chains are able to cross-link to this protein in situ (By similarity).</text>
</comment>
<comment type="similarity">
    <text evidence="2">Belongs to the universal ribosomal protein uS3 family.</text>
</comment>
<proteinExistence type="inferred from homology"/>
<dbReference type="EMBL" id="AE006468">
    <property type="protein sequence ID" value="AAL22297.1"/>
    <property type="molecule type" value="Genomic_DNA"/>
</dbReference>
<dbReference type="RefSeq" id="NP_462338.1">
    <property type="nucleotide sequence ID" value="NC_003197.2"/>
</dbReference>
<dbReference type="RefSeq" id="WP_000529945.1">
    <property type="nucleotide sequence ID" value="NC_003197.2"/>
</dbReference>
<dbReference type="SMR" id="P0A7V6"/>
<dbReference type="STRING" id="99287.STM3434"/>
<dbReference type="PaxDb" id="99287-STM3434"/>
<dbReference type="GeneID" id="1254957"/>
<dbReference type="GeneID" id="97603663"/>
<dbReference type="KEGG" id="stm:STM3434"/>
<dbReference type="PATRIC" id="fig|99287.12.peg.3631"/>
<dbReference type="HOGENOM" id="CLU_058591_0_2_6"/>
<dbReference type="OMA" id="KTNPIGN"/>
<dbReference type="PhylomeDB" id="P0A7V6"/>
<dbReference type="BioCyc" id="SENT99287:STM3434-MONOMER"/>
<dbReference type="PRO" id="PR:P0A7V6"/>
<dbReference type="Proteomes" id="UP000001014">
    <property type="component" value="Chromosome"/>
</dbReference>
<dbReference type="GO" id="GO:0022627">
    <property type="term" value="C:cytosolic small ribosomal subunit"/>
    <property type="evidence" value="ECO:0000318"/>
    <property type="project" value="GO_Central"/>
</dbReference>
<dbReference type="GO" id="GO:0003729">
    <property type="term" value="F:mRNA binding"/>
    <property type="evidence" value="ECO:0007669"/>
    <property type="project" value="UniProtKB-UniRule"/>
</dbReference>
<dbReference type="GO" id="GO:0019843">
    <property type="term" value="F:rRNA binding"/>
    <property type="evidence" value="ECO:0007669"/>
    <property type="project" value="UniProtKB-UniRule"/>
</dbReference>
<dbReference type="GO" id="GO:0003735">
    <property type="term" value="F:structural constituent of ribosome"/>
    <property type="evidence" value="ECO:0000318"/>
    <property type="project" value="GO_Central"/>
</dbReference>
<dbReference type="GO" id="GO:0006412">
    <property type="term" value="P:translation"/>
    <property type="evidence" value="ECO:0007669"/>
    <property type="project" value="UniProtKB-UniRule"/>
</dbReference>
<dbReference type="CDD" id="cd02412">
    <property type="entry name" value="KH-II_30S_S3"/>
    <property type="match status" value="1"/>
</dbReference>
<dbReference type="FunFam" id="3.30.1140.32:FF:000001">
    <property type="entry name" value="30S ribosomal protein S3"/>
    <property type="match status" value="1"/>
</dbReference>
<dbReference type="FunFam" id="3.30.300.20:FF:000001">
    <property type="entry name" value="30S ribosomal protein S3"/>
    <property type="match status" value="1"/>
</dbReference>
<dbReference type="Gene3D" id="3.30.300.20">
    <property type="match status" value="1"/>
</dbReference>
<dbReference type="Gene3D" id="3.30.1140.32">
    <property type="entry name" value="Ribosomal protein S3, C-terminal domain"/>
    <property type="match status" value="1"/>
</dbReference>
<dbReference type="HAMAP" id="MF_01309_B">
    <property type="entry name" value="Ribosomal_uS3_B"/>
    <property type="match status" value="1"/>
</dbReference>
<dbReference type="InterPro" id="IPR004087">
    <property type="entry name" value="KH_dom"/>
</dbReference>
<dbReference type="InterPro" id="IPR015946">
    <property type="entry name" value="KH_dom-like_a/b"/>
</dbReference>
<dbReference type="InterPro" id="IPR004044">
    <property type="entry name" value="KH_dom_type_2"/>
</dbReference>
<dbReference type="InterPro" id="IPR009019">
    <property type="entry name" value="KH_sf_prok-type"/>
</dbReference>
<dbReference type="InterPro" id="IPR036419">
    <property type="entry name" value="Ribosomal_S3_C_sf"/>
</dbReference>
<dbReference type="InterPro" id="IPR005704">
    <property type="entry name" value="Ribosomal_uS3_bac-typ"/>
</dbReference>
<dbReference type="InterPro" id="IPR001351">
    <property type="entry name" value="Ribosomal_uS3_C"/>
</dbReference>
<dbReference type="InterPro" id="IPR018280">
    <property type="entry name" value="Ribosomal_uS3_CS"/>
</dbReference>
<dbReference type="NCBIfam" id="TIGR01009">
    <property type="entry name" value="rpsC_bact"/>
    <property type="match status" value="1"/>
</dbReference>
<dbReference type="PANTHER" id="PTHR11760">
    <property type="entry name" value="30S/40S RIBOSOMAL PROTEIN S3"/>
    <property type="match status" value="1"/>
</dbReference>
<dbReference type="PANTHER" id="PTHR11760:SF19">
    <property type="entry name" value="SMALL RIBOSOMAL SUBUNIT PROTEIN US3C"/>
    <property type="match status" value="1"/>
</dbReference>
<dbReference type="Pfam" id="PF07650">
    <property type="entry name" value="KH_2"/>
    <property type="match status" value="1"/>
</dbReference>
<dbReference type="Pfam" id="PF00189">
    <property type="entry name" value="Ribosomal_S3_C"/>
    <property type="match status" value="1"/>
</dbReference>
<dbReference type="SMART" id="SM00322">
    <property type="entry name" value="KH"/>
    <property type="match status" value="1"/>
</dbReference>
<dbReference type="SUPFAM" id="SSF54814">
    <property type="entry name" value="Prokaryotic type KH domain (KH-domain type II)"/>
    <property type="match status" value="1"/>
</dbReference>
<dbReference type="SUPFAM" id="SSF54821">
    <property type="entry name" value="Ribosomal protein S3 C-terminal domain"/>
    <property type="match status" value="1"/>
</dbReference>
<dbReference type="PROSITE" id="PS50823">
    <property type="entry name" value="KH_TYPE_2"/>
    <property type="match status" value="1"/>
</dbReference>
<dbReference type="PROSITE" id="PS00548">
    <property type="entry name" value="RIBOSOMAL_S3"/>
    <property type="match status" value="1"/>
</dbReference>
<organism>
    <name type="scientific">Salmonella typhimurium (strain LT2 / SGSC1412 / ATCC 700720)</name>
    <dbReference type="NCBI Taxonomy" id="99287"/>
    <lineage>
        <taxon>Bacteria</taxon>
        <taxon>Pseudomonadati</taxon>
        <taxon>Pseudomonadota</taxon>
        <taxon>Gammaproteobacteria</taxon>
        <taxon>Enterobacterales</taxon>
        <taxon>Enterobacteriaceae</taxon>
        <taxon>Salmonella</taxon>
    </lineage>
</organism>
<gene>
    <name type="primary">rpsC</name>
    <name type="ordered locus">STM3434</name>
</gene>
<sequence>MGQKVHPNGIRLGIVKPWNSTWFANTKEFADNLDSDFKVRQYLTKELAKASVSRIVIERPAKSIRVTIHTARPGIVIGKKGEDVEKLRKVVADIAGVPAQINIAEVRKPELDAKLVADSITSQLERRVMFRRAMKRAVQNAMRLGAKGIKVEVSGRLGGAEIARTEWYREGRVPLHTLRADIDYNTSEAHTTYGVIGVKVWIFKGEILGGMAAVEQPEKPAAQPKKQQRKGRK</sequence>
<name>RS3_SALTY</name>
<reference key="1">
    <citation type="journal article" date="2001" name="Nature">
        <title>Complete genome sequence of Salmonella enterica serovar Typhimurium LT2.</title>
        <authorList>
            <person name="McClelland M."/>
            <person name="Sanderson K.E."/>
            <person name="Spieth J."/>
            <person name="Clifton S.W."/>
            <person name="Latreille P."/>
            <person name="Courtney L."/>
            <person name="Porwollik S."/>
            <person name="Ali J."/>
            <person name="Dante M."/>
            <person name="Du F."/>
            <person name="Hou S."/>
            <person name="Layman D."/>
            <person name="Leonard S."/>
            <person name="Nguyen C."/>
            <person name="Scott K."/>
            <person name="Holmes A."/>
            <person name="Grewal N."/>
            <person name="Mulvaney E."/>
            <person name="Ryan E."/>
            <person name="Sun H."/>
            <person name="Florea L."/>
            <person name="Miller W."/>
            <person name="Stoneking T."/>
            <person name="Nhan M."/>
            <person name="Waterston R."/>
            <person name="Wilson R.K."/>
        </authorList>
    </citation>
    <scope>NUCLEOTIDE SEQUENCE [LARGE SCALE GENOMIC DNA]</scope>
    <source>
        <strain>LT2 / SGSC1412 / ATCC 700720</strain>
    </source>
</reference>
<feature type="initiator methionine" description="Removed" evidence="1">
    <location>
        <position position="1"/>
    </location>
</feature>
<feature type="chain" id="PRO_0000130192" description="Small ribosomal subunit protein uS3">
    <location>
        <begin position="2"/>
        <end position="233"/>
    </location>
</feature>
<feature type="domain" description="KH type-2">
    <location>
        <begin position="39"/>
        <end position="107"/>
    </location>
</feature>
<evidence type="ECO:0000250" key="1"/>
<evidence type="ECO:0000305" key="2"/>
<keyword id="KW-1185">Reference proteome</keyword>
<keyword id="KW-0687">Ribonucleoprotein</keyword>
<keyword id="KW-0689">Ribosomal protein</keyword>
<keyword id="KW-0694">RNA-binding</keyword>
<keyword id="KW-0699">rRNA-binding</keyword>